<feature type="chain" id="PRO_0000098158" description="HTH-type transcriptional regulator TnrA">
    <location>
        <begin position="1"/>
        <end position="110"/>
    </location>
</feature>
<feature type="domain" description="HTH merR-type" evidence="1">
    <location>
        <begin position="13"/>
        <end position="81"/>
    </location>
</feature>
<feature type="DNA-binding region" description="H-T-H motif" evidence="1">
    <location>
        <begin position="16"/>
        <end position="35"/>
    </location>
</feature>
<feature type="mutagenesis site" description="1000-fold decrease of the affinity for NrgAB compared to the wild-type. Structure more asymmetric than that of the wild-type." evidence="3">
    <original>RQIR</original>
    <variation>AQIA</variation>
    <location>
        <begin position="28"/>
        <end position="31"/>
    </location>
</feature>
<feature type="mutagenesis site" description="Causes constitutive expression of TnrA. Feedback-inhibited GlnA has a greatly reduced ability to block the DNA binding." evidence="4">
    <original>E</original>
    <variation>G</variation>
    <location>
        <position position="98"/>
    </location>
</feature>
<feature type="mutagenesis site" description="Causes constitutive expression of TnrA. Feedback-inhibited GlnA has a greatly reduced ability to block the DNA-binding." evidence="4">
    <original>G</original>
    <variation>E</variation>
    <location>
        <position position="99"/>
    </location>
</feature>
<feature type="mutagenesis site" description="Causes constitutive expression of TnrA. Feedback-inhibited GlnA has a greatly reduced ability to block the DNA binding." evidence="4">
    <original>G</original>
    <variation>R</variation>
    <location>
        <position position="99"/>
    </location>
</feature>
<feature type="mutagenesis site" description="No interaction with glutamine synthetase." evidence="8">
    <original>K</original>
    <variation>E</variation>
    <location>
        <position position="108"/>
    </location>
</feature>
<feature type="helix" evidence="15">
    <location>
        <begin position="97"/>
        <end position="100"/>
    </location>
</feature>
<feature type="helix" evidence="15">
    <location>
        <begin position="102"/>
        <end position="108"/>
    </location>
</feature>
<evidence type="ECO:0000255" key="1">
    <source>
        <dbReference type="PROSITE-ProRule" id="PRU00254"/>
    </source>
</evidence>
<evidence type="ECO:0000269" key="2">
    <source>
    </source>
</evidence>
<evidence type="ECO:0000269" key="3">
    <source>
    </source>
</evidence>
<evidence type="ECO:0000269" key="4">
    <source>
    </source>
</evidence>
<evidence type="ECO:0000269" key="5">
    <source>
    </source>
</evidence>
<evidence type="ECO:0000269" key="6">
    <source>
    </source>
</evidence>
<evidence type="ECO:0000269" key="7">
    <source>
    </source>
</evidence>
<evidence type="ECO:0000269" key="8">
    <source>
    </source>
</evidence>
<evidence type="ECO:0000269" key="9">
    <source>
    </source>
</evidence>
<evidence type="ECO:0000269" key="10">
    <source>
    </source>
</evidence>
<evidence type="ECO:0000303" key="11">
    <source>
    </source>
</evidence>
<evidence type="ECO:0000305" key="12"/>
<evidence type="ECO:0000305" key="13">
    <source>
    </source>
</evidence>
<evidence type="ECO:0007744" key="14">
    <source>
        <dbReference type="PDB" id="4S0R"/>
    </source>
</evidence>
<evidence type="ECO:0007829" key="15">
    <source>
        <dbReference type="PDB" id="4S0R"/>
    </source>
</evidence>
<sequence length="110" mass="13126">MTTEDHSYKDKKVISIGIVSELTGLSVRQIRYYEERKLIYPQRSSRGTRKYSFADVERLMDIANKREDGVQTAEILKDMRKKEQMLKNDPQVRKKMLEGQLNAHFRYKNR</sequence>
<dbReference type="EMBL" id="U55004">
    <property type="protein sequence ID" value="AAC44335.1"/>
    <property type="molecule type" value="Genomic_DNA"/>
</dbReference>
<dbReference type="EMBL" id="X98512">
    <property type="protein sequence ID" value="CAA67135.1"/>
    <property type="molecule type" value="Genomic_DNA"/>
</dbReference>
<dbReference type="EMBL" id="AJ002571">
    <property type="protein sequence ID" value="CAA05609.1"/>
    <property type="molecule type" value="Genomic_DNA"/>
</dbReference>
<dbReference type="EMBL" id="AL009126">
    <property type="protein sequence ID" value="CAB13188.1"/>
    <property type="molecule type" value="Genomic_DNA"/>
</dbReference>
<dbReference type="PIR" id="S70466">
    <property type="entry name" value="S70466"/>
</dbReference>
<dbReference type="RefSeq" id="NP_389214.1">
    <property type="nucleotide sequence ID" value="NC_000964.3"/>
</dbReference>
<dbReference type="RefSeq" id="WP_003232541.1">
    <property type="nucleotide sequence ID" value="NZ_OZ025638.1"/>
</dbReference>
<dbReference type="PDB" id="4S0R">
    <property type="method" value="X-ray"/>
    <property type="resolution" value="3.50 A"/>
    <property type="chains" value="1/2/O/P/Q/R/S/T/U/V/W/X/Y/Z=95-110"/>
</dbReference>
<dbReference type="PDBsum" id="4S0R"/>
<dbReference type="SMR" id="Q45666"/>
<dbReference type="FunCoup" id="Q45666">
    <property type="interactions" value="5"/>
</dbReference>
<dbReference type="IntAct" id="Q45666">
    <property type="interactions" value="2"/>
</dbReference>
<dbReference type="MINT" id="Q45666"/>
<dbReference type="STRING" id="224308.BSU13310"/>
<dbReference type="PaxDb" id="224308-BSU13310"/>
<dbReference type="EnsemblBacteria" id="CAB13188">
    <property type="protein sequence ID" value="CAB13188"/>
    <property type="gene ID" value="BSU_13310"/>
</dbReference>
<dbReference type="GeneID" id="86874176"/>
<dbReference type="GeneID" id="936445"/>
<dbReference type="KEGG" id="bsu:BSU13310"/>
<dbReference type="PATRIC" id="fig|224308.179.peg.1446"/>
<dbReference type="eggNOG" id="COG0789">
    <property type="taxonomic scope" value="Bacteria"/>
</dbReference>
<dbReference type="InParanoid" id="Q45666"/>
<dbReference type="OrthoDB" id="9806513at2"/>
<dbReference type="PhylomeDB" id="Q45666"/>
<dbReference type="BioCyc" id="BSUB:BSU13310-MONOMER"/>
<dbReference type="SABIO-RK" id="Q45666"/>
<dbReference type="Proteomes" id="UP000001570">
    <property type="component" value="Chromosome"/>
</dbReference>
<dbReference type="GO" id="GO:0005886">
    <property type="term" value="C:plasma membrane"/>
    <property type="evidence" value="ECO:0007669"/>
    <property type="project" value="UniProtKB-SubCell"/>
</dbReference>
<dbReference type="GO" id="GO:0001046">
    <property type="term" value="F:core promoter sequence-specific DNA binding"/>
    <property type="evidence" value="ECO:0000315"/>
    <property type="project" value="CAFA"/>
</dbReference>
<dbReference type="GO" id="GO:0003700">
    <property type="term" value="F:DNA-binding transcription factor activity"/>
    <property type="evidence" value="ECO:0000318"/>
    <property type="project" value="GO_Central"/>
</dbReference>
<dbReference type="GO" id="GO:0043562">
    <property type="term" value="P:cellular response to nitrogen levels"/>
    <property type="evidence" value="ECO:0000315"/>
    <property type="project" value="CAFA"/>
</dbReference>
<dbReference type="GO" id="GO:0045892">
    <property type="term" value="P:negative regulation of DNA-templated transcription"/>
    <property type="evidence" value="ECO:0000318"/>
    <property type="project" value="GO_Central"/>
</dbReference>
<dbReference type="GO" id="GO:0090294">
    <property type="term" value="P:nitrogen catabolite activation of transcription"/>
    <property type="evidence" value="ECO:0000315"/>
    <property type="project" value="CAFA"/>
</dbReference>
<dbReference type="CDD" id="cd01105">
    <property type="entry name" value="HTH_GlnR-like"/>
    <property type="match status" value="1"/>
</dbReference>
<dbReference type="FunFam" id="1.10.1660.10:FF:000010">
    <property type="entry name" value="MerR family transcriptional regulator"/>
    <property type="match status" value="1"/>
</dbReference>
<dbReference type="Gene3D" id="1.10.1660.10">
    <property type="match status" value="1"/>
</dbReference>
<dbReference type="InterPro" id="IPR009061">
    <property type="entry name" value="DNA-bd_dom_put_sf"/>
</dbReference>
<dbReference type="InterPro" id="IPR000551">
    <property type="entry name" value="MerR-type_HTH_dom"/>
</dbReference>
<dbReference type="InterPro" id="IPR047057">
    <property type="entry name" value="MerR_fam"/>
</dbReference>
<dbReference type="PANTHER" id="PTHR30204:SF65">
    <property type="entry name" value="HTH-TYPE TRANSCRIPTIONAL REGULATOR TNRA"/>
    <property type="match status" value="1"/>
</dbReference>
<dbReference type="PANTHER" id="PTHR30204">
    <property type="entry name" value="REDOX-CYCLING DRUG-SENSING TRANSCRIPTIONAL ACTIVATOR SOXR"/>
    <property type="match status" value="1"/>
</dbReference>
<dbReference type="Pfam" id="PF13411">
    <property type="entry name" value="MerR_1"/>
    <property type="match status" value="1"/>
</dbReference>
<dbReference type="PRINTS" id="PR00040">
    <property type="entry name" value="HTHMERR"/>
</dbReference>
<dbReference type="SMART" id="SM00422">
    <property type="entry name" value="HTH_MERR"/>
    <property type="match status" value="1"/>
</dbReference>
<dbReference type="SUPFAM" id="SSF46955">
    <property type="entry name" value="Putative DNA-binding domain"/>
    <property type="match status" value="1"/>
</dbReference>
<dbReference type="PROSITE" id="PS50937">
    <property type="entry name" value="HTH_MERR_2"/>
    <property type="match status" value="1"/>
</dbReference>
<organism>
    <name type="scientific">Bacillus subtilis (strain 168)</name>
    <dbReference type="NCBI Taxonomy" id="224308"/>
    <lineage>
        <taxon>Bacteria</taxon>
        <taxon>Bacillati</taxon>
        <taxon>Bacillota</taxon>
        <taxon>Bacilli</taxon>
        <taxon>Bacillales</taxon>
        <taxon>Bacillaceae</taxon>
        <taxon>Bacillus</taxon>
    </lineage>
</organism>
<protein>
    <recommendedName>
        <fullName evidence="11">HTH-type transcriptional regulator TnrA</fullName>
    </recommendedName>
    <alternativeName>
        <fullName evidence="13">Transcriptional nitrogen regulatory protein A</fullName>
        <shortName evidence="13">TnrA</shortName>
    </alternativeName>
</protein>
<proteinExistence type="evidence at protein level"/>
<comment type="function">
    <text evidence="2 3 4 5 8 9 10">Transcription regulator that actives the transcription of genes required for nitrogen assimilation such as nrgAB (ammonium transport), nasABCDEF (nitrate/nitrite assimilation), ureABC (urea degradation) and gabP (GABA transport), during nitrogen limitation (PubMed:10231480, PubMed:10864496, PubMed:11719184, PubMed:12823818, PubMed:8799114, PubMed:9603886). Also represses glnRA and gltAB in the absence of ammonium (PubMed:10231480, PubMed:10864496, PubMed:11719184, PubMed:12823818, PubMed:8799114, PubMed:9603886). On the contrary of the MerR members, which require longer DNA sites for high-affinity binding, TnrA requires a DNA sequence of 17 nucleotides as minimal binding site (PubMed:10231480, PubMed:25691471).</text>
</comment>
<comment type="activity regulation">
    <text evidence="4 8">Under conditions of nitrogen excess, the DNA-binding activity is inhibited by the formation of a stable complex with feedback-inhibited GlnA (PubMed:11719184, PubMed:25691471). The presence of glutamine and AMP increases the inhibitory activity of glutamine synthetase by more than 1000-fold (PubMed:11719184).</text>
</comment>
<comment type="subunit">
    <text evidence="3 6 7 8">Homodimer (PubMed:10864496, PubMed:25691471). Under conditions of nitrogen excess, TnrA forms a stable complex with feedback-inhibited GlnA. Interacts with GlnK-AmtB complex.</text>
</comment>
<comment type="interaction">
    <interactant intactId="EBI-8507041">
        <id>Q45666</id>
    </interactant>
    <interactant intactId="EBI-6402863">
        <id>P12425</id>
        <label>glnA</label>
    </interactant>
    <organismsDiffer>false</organismsDiffer>
    <experiments>8</experiments>
</comment>
<comment type="interaction">
    <interactant intactId="EBI-8507041">
        <id>Q45666</id>
    </interactant>
    <interactant intactId="EBI-8507093">
        <id>P40758</id>
        <label>glnK</label>
    </interactant>
    <organismsDiffer>false</organismsDiffer>
    <experiments>6</experiments>
</comment>
<comment type="subcellular location">
    <subcellularLocation>
        <location>Cell membrane</location>
    </subcellularLocation>
    <text evidence="6 7">Under poor nitrogen source such as nitrate, TnrA is associated with the cell membrane via the ammonium uptake proteins AmtB and its cognate regulator GlnK (PubMed:21435182). Without usable nitrogen source, TnrA is released from the membrane to the cytoplasm where it is degraded by proteolysis (PubMed:21435182). The presence of 4 mM ATP leads to concomitant solubilization of GlnK and TnrA (PubMed:17001076). GlnK and Amtb are required for the membrane association of TnrA (PubMed:17001076).</text>
</comment>
<comment type="induction">
    <text evidence="2 3 10">Under conditions of nitrogen excess, repressed by GlnR. Under conditions of nitrogen-limited growth, it positively regulates its own expression.</text>
</comment>
<comment type="disruption phenotype">
    <text evidence="9">TnrA mutant is impaired in its ability to utilize allantoin, gamma-aminobutyrate, isoleucine, nitrate, urea and valine as nitrogen sources. During nitrogen-limited growth, transcription of the nrgAB, nasB, gabP, and ure genes is significantly reduced in the tnrA mutant. In contrast, the level of glnRA expression is 4-fold higher in the tnrA mutant than in wild-type cells during nitrogen restriction.</text>
</comment>
<comment type="miscellaneous">
    <text evidence="12">The amino acid sequences of the N-terminal DNA binding domains of TnrA and GlnR are highly similar, and both proteins bind to DNA sequences with a common consensus sequence. In contrast, the C-terminal signal transduction domains of TnrA and GlnR have no homology.</text>
</comment>
<gene>
    <name evidence="11" type="primary">tnrA</name>
    <name type="synonym">scgR</name>
    <name type="ordered locus">BSU13310</name>
</gene>
<reference key="1">
    <citation type="journal article" date="1996" name="Proc. Natl. Acad. Sci. U.S.A.">
        <title>TnrA, a transcription factor required for global nitrogen regulation in Bacillus subtilis.</title>
        <authorList>
            <person name="Wray L.V. Jr."/>
            <person name="Ferson A.E."/>
            <person name="Rohrer K."/>
            <person name="Fisher S.H."/>
        </authorList>
    </citation>
    <scope>NUCLEOTIDE SEQUENCE [GENOMIC DNA]</scope>
    <scope>FUNCTION</scope>
    <scope>DISRUPTION PHENOTYPE</scope>
    <source>
        <strain>168</strain>
    </source>
</reference>
<reference key="2">
    <citation type="submission" date="1996-06" db="EMBL/GenBank/DDBJ databases">
        <title>The secG deletion mutation of Escherichia coli is suppressed by expression of a novel regulatory protein of Bacillus subtilis.</title>
        <authorList>
            <person name="Kontinen V.P."/>
            <person name="Helander I.M."/>
            <person name="Tokuda H."/>
        </authorList>
    </citation>
    <scope>NUCLEOTIDE SEQUENCE [GENOMIC DNA]</scope>
    <source>
        <strain>168</strain>
    </source>
</reference>
<reference key="3">
    <citation type="submission" date="1997-11" db="EMBL/GenBank/DDBJ databases">
        <title>Sequence of the Bacillus subtilis genome between xlyA and ykoR.</title>
        <authorList>
            <person name="Devine K.M."/>
        </authorList>
    </citation>
    <scope>NUCLEOTIDE SEQUENCE [GENOMIC DNA]</scope>
    <source>
        <strain>168</strain>
    </source>
</reference>
<reference key="4">
    <citation type="journal article" date="1997" name="Nature">
        <title>The complete genome sequence of the Gram-positive bacterium Bacillus subtilis.</title>
        <authorList>
            <person name="Kunst F."/>
            <person name="Ogasawara N."/>
            <person name="Moszer I."/>
            <person name="Albertini A.M."/>
            <person name="Alloni G."/>
            <person name="Azevedo V."/>
            <person name="Bertero M.G."/>
            <person name="Bessieres P."/>
            <person name="Bolotin A."/>
            <person name="Borchert S."/>
            <person name="Borriss R."/>
            <person name="Boursier L."/>
            <person name="Brans A."/>
            <person name="Braun M."/>
            <person name="Brignell S.C."/>
            <person name="Bron S."/>
            <person name="Brouillet S."/>
            <person name="Bruschi C.V."/>
            <person name="Caldwell B."/>
            <person name="Capuano V."/>
            <person name="Carter N.M."/>
            <person name="Choi S.-K."/>
            <person name="Codani J.-J."/>
            <person name="Connerton I.F."/>
            <person name="Cummings N.J."/>
            <person name="Daniel R.A."/>
            <person name="Denizot F."/>
            <person name="Devine K.M."/>
            <person name="Duesterhoeft A."/>
            <person name="Ehrlich S.D."/>
            <person name="Emmerson P.T."/>
            <person name="Entian K.-D."/>
            <person name="Errington J."/>
            <person name="Fabret C."/>
            <person name="Ferrari E."/>
            <person name="Foulger D."/>
            <person name="Fritz C."/>
            <person name="Fujita M."/>
            <person name="Fujita Y."/>
            <person name="Fuma S."/>
            <person name="Galizzi A."/>
            <person name="Galleron N."/>
            <person name="Ghim S.-Y."/>
            <person name="Glaser P."/>
            <person name="Goffeau A."/>
            <person name="Golightly E.J."/>
            <person name="Grandi G."/>
            <person name="Guiseppi G."/>
            <person name="Guy B.J."/>
            <person name="Haga K."/>
            <person name="Haiech J."/>
            <person name="Harwood C.R."/>
            <person name="Henaut A."/>
            <person name="Hilbert H."/>
            <person name="Holsappel S."/>
            <person name="Hosono S."/>
            <person name="Hullo M.-F."/>
            <person name="Itaya M."/>
            <person name="Jones L.-M."/>
            <person name="Joris B."/>
            <person name="Karamata D."/>
            <person name="Kasahara Y."/>
            <person name="Klaerr-Blanchard M."/>
            <person name="Klein C."/>
            <person name="Kobayashi Y."/>
            <person name="Koetter P."/>
            <person name="Koningstein G."/>
            <person name="Krogh S."/>
            <person name="Kumano M."/>
            <person name="Kurita K."/>
            <person name="Lapidus A."/>
            <person name="Lardinois S."/>
            <person name="Lauber J."/>
            <person name="Lazarevic V."/>
            <person name="Lee S.-M."/>
            <person name="Levine A."/>
            <person name="Liu H."/>
            <person name="Masuda S."/>
            <person name="Mauel C."/>
            <person name="Medigue C."/>
            <person name="Medina N."/>
            <person name="Mellado R.P."/>
            <person name="Mizuno M."/>
            <person name="Moestl D."/>
            <person name="Nakai S."/>
            <person name="Noback M."/>
            <person name="Noone D."/>
            <person name="O'Reilly M."/>
            <person name="Ogawa K."/>
            <person name="Ogiwara A."/>
            <person name="Oudega B."/>
            <person name="Park S.-H."/>
            <person name="Parro V."/>
            <person name="Pohl T.M."/>
            <person name="Portetelle D."/>
            <person name="Porwollik S."/>
            <person name="Prescott A.M."/>
            <person name="Presecan E."/>
            <person name="Pujic P."/>
            <person name="Purnelle B."/>
            <person name="Rapoport G."/>
            <person name="Rey M."/>
            <person name="Reynolds S."/>
            <person name="Rieger M."/>
            <person name="Rivolta C."/>
            <person name="Rocha E."/>
            <person name="Roche B."/>
            <person name="Rose M."/>
            <person name="Sadaie Y."/>
            <person name="Sato T."/>
            <person name="Scanlan E."/>
            <person name="Schleich S."/>
            <person name="Schroeter R."/>
            <person name="Scoffone F."/>
            <person name="Sekiguchi J."/>
            <person name="Sekowska A."/>
            <person name="Seror S.J."/>
            <person name="Serror P."/>
            <person name="Shin B.-S."/>
            <person name="Soldo B."/>
            <person name="Sorokin A."/>
            <person name="Tacconi E."/>
            <person name="Takagi T."/>
            <person name="Takahashi H."/>
            <person name="Takemaru K."/>
            <person name="Takeuchi M."/>
            <person name="Tamakoshi A."/>
            <person name="Tanaka T."/>
            <person name="Terpstra P."/>
            <person name="Tognoni A."/>
            <person name="Tosato V."/>
            <person name="Uchiyama S."/>
            <person name="Vandenbol M."/>
            <person name="Vannier F."/>
            <person name="Vassarotti A."/>
            <person name="Viari A."/>
            <person name="Wambutt R."/>
            <person name="Wedler E."/>
            <person name="Wedler H."/>
            <person name="Weitzenegger T."/>
            <person name="Winters P."/>
            <person name="Wipat A."/>
            <person name="Yamamoto H."/>
            <person name="Yamane K."/>
            <person name="Yasumoto K."/>
            <person name="Yata K."/>
            <person name="Yoshida K."/>
            <person name="Yoshikawa H.-F."/>
            <person name="Zumstein E."/>
            <person name="Yoshikawa H."/>
            <person name="Danchin A."/>
        </authorList>
    </citation>
    <scope>NUCLEOTIDE SEQUENCE [LARGE SCALE GENOMIC DNA]</scope>
    <source>
        <strain>168</strain>
    </source>
</reference>
<reference key="5">
    <citation type="journal article" date="1998" name="J. Bacteriol.">
        <title>Mutational analysis of the TnrA-binding sites in the Bacillus subtilis nrgAB and gabP promoter regions.</title>
        <authorList>
            <person name="Wray L.V. Jr."/>
            <person name="Zalieckas J.M."/>
            <person name="Ferson A.E."/>
            <person name="Fisher S.H."/>
        </authorList>
    </citation>
    <scope>FUNCTION</scope>
    <scope>INDUCTION</scope>
</reference>
<reference key="6">
    <citation type="journal article" date="1999" name="Mol. Microbiol.">
        <title>Regulation of nitrogen metabolism in Bacillus subtilis: vive la difference!</title>
        <authorList>
            <person name="Fisher S.H."/>
        </authorList>
    </citation>
    <scope>FUNCTION</scope>
    <scope>INDUCTION</scope>
</reference>
<reference key="7">
    <citation type="journal article" date="2000" name="J. Mol. Biol.">
        <title>Purification and in vitro activities of the Bacillus subtilis TnrA transcription factor.</title>
        <authorList>
            <person name="Wray L.V. Jr."/>
            <person name="Zalieckas J.M."/>
            <person name="Fisher S.H."/>
        </authorList>
    </citation>
    <scope>FUNCTION</scope>
    <scope>MUTAGENESIS OF 28-ARG--ARG-31</scope>
    <scope>INDUCTION</scope>
    <scope>SUBUNIT</scope>
    <source>
        <strain>168</strain>
    </source>
</reference>
<reference key="8">
    <citation type="journal article" date="2001" name="Cell">
        <title>Bacillus subtilis glutamine synthetase controls gene expression through a protein-protein interaction with transcription factor TnrA.</title>
        <authorList>
            <person name="Wray L.V. Jr."/>
            <person name="Zalieckas J.M."/>
            <person name="Fisher S.H."/>
        </authorList>
    </citation>
    <scope>FUNCTION</scope>
    <scope>INTERACTION WITH GLUTAMINE SYNTHETASE</scope>
    <scope>ACTIVITY REGULATION</scope>
    <scope>MUTAGENESIS OF GLU-98 AND GLY-99</scope>
</reference>
<reference key="9">
    <citation type="journal article" date="2003" name="Mol. Microbiol.">
        <title>Identification of additional TnrA-regulated genes of Bacillus subtilis associated with a TnrA box.</title>
        <authorList>
            <person name="Yoshida K."/>
            <person name="Yamaguchi H."/>
            <person name="Kinehara M."/>
            <person name="Ohki Y.-H."/>
            <person name="Nakaura Y."/>
            <person name="Fujita Y."/>
        </authorList>
    </citation>
    <scope>FUNCTION</scope>
</reference>
<reference key="10">
    <citation type="journal article" date="2006" name="J. Biol. Chem.">
        <title>Interaction of the membrane-bound GlnK-AmtB complex with the master regulator of nitrogen metabolism TnrA in Bacillus subtilis.</title>
        <authorList>
            <person name="Heinrich A."/>
            <person name="Woyda K."/>
            <person name="Brauburger K."/>
            <person name="Meiss G."/>
            <person name="Detsch C."/>
            <person name="Stuelke J."/>
            <person name="Forchhammer K."/>
        </authorList>
    </citation>
    <scope>INTERACTION WITH GLNK AND AMTB</scope>
    <scope>SUBCELLULAR LOCATION</scope>
    <scope>SUBUNIT</scope>
</reference>
<reference key="11">
    <citation type="journal article" date="2011" name="FEBS J.">
        <title>Interaction of the general transcription factor TnrA with the PII-like protein GlnK and glutamine synthetase in Bacillus subtilis.</title>
        <authorList>
            <person name="Kayumov A."/>
            <person name="Heinrich A."/>
            <person name="Fedorova K."/>
            <person name="Ilinskaya O."/>
            <person name="Forchhammer K."/>
        </authorList>
    </citation>
    <scope>INTERACTION WITH GLNK AND AMTB</scope>
    <scope>SUBCELLULAR LOCATION</scope>
    <scope>SUBUNIT</scope>
</reference>
<reference evidence="14" key="12">
    <citation type="journal article" date="2015" name="Genes Dev.">
        <title>Structures of regulatory machinery reveal novel molecular mechanisms controlling B. subtilis nitrogen homeostasis.</title>
        <authorList>
            <person name="Schumacher M.A."/>
            <person name="Chinnam N.B."/>
            <person name="Cuthbert B."/>
            <person name="Tonthat N.K."/>
            <person name="Whitfill T."/>
        </authorList>
    </citation>
    <scope>X-RAY CRYSTALLOGRAPHY (3.50 ANGSTROMS) OF 95-110</scope>
    <scope>ACTIVITY REGULATION</scope>
    <scope>MUTAGENESIS OF LYS-108</scope>
    <scope>SUBUNIT</scope>
</reference>
<keyword id="KW-0002">3D-structure</keyword>
<keyword id="KW-0010">Activator</keyword>
<keyword id="KW-1003">Cell membrane</keyword>
<keyword id="KW-0238">DNA-binding</keyword>
<keyword id="KW-0472">Membrane</keyword>
<keyword id="KW-1185">Reference proteome</keyword>
<keyword id="KW-0678">Repressor</keyword>
<keyword id="KW-0804">Transcription</keyword>
<keyword id="KW-0805">Transcription regulation</keyword>
<name>TNRA_BACSU</name>
<accession>Q45666</accession>